<accession>Q9UR09</accession>
<comment type="function">
    <text evidence="2">Involved in cell wall synthesis. May be required for the activation of 1,3-beta-glucan synthase.</text>
</comment>
<comment type="subcellular location">
    <subcellularLocation>
        <location evidence="3">Secreted</location>
        <location evidence="3">Cell wall</location>
    </subcellularLocation>
</comment>
<comment type="similarity">
    <text evidence="3">Belongs to the SUN family.</text>
</comment>
<name>PSU1_SCHPO</name>
<protein>
    <recommendedName>
        <fullName>Probable secreted beta-glucosidase PSU1</fullName>
        <ecNumber>3.2.1.-</ecNumber>
    </recommendedName>
    <alternativeName>
        <fullName>Cell wall synthesis protein psu1</fullName>
    </alternativeName>
</protein>
<evidence type="ECO:0000255" key="1"/>
<evidence type="ECO:0000269" key="2">
    <source>
    </source>
</evidence>
<evidence type="ECO:0000305" key="3"/>
<dbReference type="EC" id="3.2.1.-"/>
<dbReference type="EMBL" id="AB009980">
    <property type="protein sequence ID" value="BAA83907.1"/>
    <property type="molecule type" value="Genomic_DNA"/>
</dbReference>
<dbReference type="EMBL" id="CU329670">
    <property type="protein sequence ID" value="CAB65613.1"/>
    <property type="molecule type" value="Genomic_DNA"/>
</dbReference>
<dbReference type="PIR" id="JC7092">
    <property type="entry name" value="JC7092"/>
</dbReference>
<dbReference type="RefSeq" id="NP_593500.1">
    <property type="nucleotide sequence ID" value="NM_001018934.2"/>
</dbReference>
<dbReference type="BioGRID" id="279693">
    <property type="interactions" value="6"/>
</dbReference>
<dbReference type="FunCoup" id="Q9UR09">
    <property type="interactions" value="19"/>
</dbReference>
<dbReference type="IntAct" id="Q9UR09">
    <property type="interactions" value="3"/>
</dbReference>
<dbReference type="MINT" id="Q9UR09"/>
<dbReference type="STRING" id="284812.Q9UR09"/>
<dbReference type="CAZy" id="GH132">
    <property type="family name" value="Glycoside Hydrolase Family 132"/>
</dbReference>
<dbReference type="PaxDb" id="4896-SPAC1002.13c.1"/>
<dbReference type="EnsemblFungi" id="SPAC1002.13c.1">
    <property type="protein sequence ID" value="SPAC1002.13c.1:pep"/>
    <property type="gene ID" value="SPAC1002.13c"/>
</dbReference>
<dbReference type="GeneID" id="2543265"/>
<dbReference type="KEGG" id="spo:2543265"/>
<dbReference type="PomBase" id="SPAC1002.13c">
    <property type="gene designation" value="psu1"/>
</dbReference>
<dbReference type="VEuPathDB" id="FungiDB:SPAC1002.13c"/>
<dbReference type="eggNOG" id="ENOG502QPVV">
    <property type="taxonomic scope" value="Eukaryota"/>
</dbReference>
<dbReference type="HOGENOM" id="CLU_033459_1_0_1"/>
<dbReference type="InParanoid" id="Q9UR09"/>
<dbReference type="OMA" id="ACVWGSS"/>
<dbReference type="PhylomeDB" id="Q9UR09"/>
<dbReference type="PRO" id="PR:Q9UR09"/>
<dbReference type="Proteomes" id="UP000002485">
    <property type="component" value="Chromosome I"/>
</dbReference>
<dbReference type="GO" id="GO:0009986">
    <property type="term" value="C:cell surface"/>
    <property type="evidence" value="ECO:0000318"/>
    <property type="project" value="GO_Central"/>
</dbReference>
<dbReference type="GO" id="GO:0005576">
    <property type="term" value="C:extracellular region"/>
    <property type="evidence" value="ECO:0000314"/>
    <property type="project" value="PomBase"/>
</dbReference>
<dbReference type="GO" id="GO:0009277">
    <property type="term" value="C:fungal-type cell wall"/>
    <property type="evidence" value="ECO:0000314"/>
    <property type="project" value="PomBase"/>
</dbReference>
<dbReference type="GO" id="GO:0008422">
    <property type="term" value="F:beta-glucosidase activity"/>
    <property type="evidence" value="ECO:0000255"/>
    <property type="project" value="PomBase"/>
</dbReference>
<dbReference type="GO" id="GO:0031505">
    <property type="term" value="P:fungal-type cell wall organization"/>
    <property type="evidence" value="ECO:0000318"/>
    <property type="project" value="GO_Central"/>
</dbReference>
<dbReference type="GO" id="GO:0071852">
    <property type="term" value="P:fungal-type cell wall organization or biogenesis"/>
    <property type="evidence" value="ECO:0000315"/>
    <property type="project" value="PomBase"/>
</dbReference>
<dbReference type="GO" id="GO:0000272">
    <property type="term" value="P:polysaccharide catabolic process"/>
    <property type="evidence" value="ECO:0007669"/>
    <property type="project" value="UniProtKB-KW"/>
</dbReference>
<dbReference type="GO" id="GO:0000920">
    <property type="term" value="P:septum digestion after cytokinesis"/>
    <property type="evidence" value="ECO:0000315"/>
    <property type="project" value="PomBase"/>
</dbReference>
<dbReference type="InterPro" id="IPR051526">
    <property type="entry name" value="Beta-Glucosidase_SUN"/>
</dbReference>
<dbReference type="InterPro" id="IPR005556">
    <property type="entry name" value="SUN"/>
</dbReference>
<dbReference type="PANTHER" id="PTHR31316">
    <property type="entry name" value="BETA-GLUCOSIDASE-LIKE PROTEIN NCA3, MITOCHONDRIAL-RELATED"/>
    <property type="match status" value="1"/>
</dbReference>
<dbReference type="PANTHER" id="PTHR31316:SF0">
    <property type="entry name" value="SECRETED BETA-GLUCOSIDASE SIM1-RELATED"/>
    <property type="match status" value="1"/>
</dbReference>
<dbReference type="Pfam" id="PF03856">
    <property type="entry name" value="SUN"/>
    <property type="match status" value="1"/>
</dbReference>
<reference key="1">
    <citation type="journal article" date="1999" name="Biochem. Biophys. Res. Commun.">
        <title>Cloning and characterization of psu1+, a new essential fission yeast gene involved in cell wall synthesis.</title>
        <authorList>
            <person name="Omi K."/>
            <person name="Sonoda H."/>
            <person name="Nagata K."/>
            <person name="Sugita K."/>
        </authorList>
    </citation>
    <scope>NUCLEOTIDE SEQUENCE [GENOMIC DNA]</scope>
    <scope>FUNCTION</scope>
    <source>
        <strain>972 / ATCC 24843</strain>
    </source>
</reference>
<reference key="2">
    <citation type="journal article" date="2002" name="Nature">
        <title>The genome sequence of Schizosaccharomyces pombe.</title>
        <authorList>
            <person name="Wood V."/>
            <person name="Gwilliam R."/>
            <person name="Rajandream M.A."/>
            <person name="Lyne M.H."/>
            <person name="Lyne R."/>
            <person name="Stewart A."/>
            <person name="Sgouros J.G."/>
            <person name="Peat N."/>
            <person name="Hayles J."/>
            <person name="Baker S.G."/>
            <person name="Basham D."/>
            <person name="Bowman S."/>
            <person name="Brooks K."/>
            <person name="Brown D."/>
            <person name="Brown S."/>
            <person name="Chillingworth T."/>
            <person name="Churcher C.M."/>
            <person name="Collins M."/>
            <person name="Connor R."/>
            <person name="Cronin A."/>
            <person name="Davis P."/>
            <person name="Feltwell T."/>
            <person name="Fraser A."/>
            <person name="Gentles S."/>
            <person name="Goble A."/>
            <person name="Hamlin N."/>
            <person name="Harris D.E."/>
            <person name="Hidalgo J."/>
            <person name="Hodgson G."/>
            <person name="Holroyd S."/>
            <person name="Hornsby T."/>
            <person name="Howarth S."/>
            <person name="Huckle E.J."/>
            <person name="Hunt S."/>
            <person name="Jagels K."/>
            <person name="James K.D."/>
            <person name="Jones L."/>
            <person name="Jones M."/>
            <person name="Leather S."/>
            <person name="McDonald S."/>
            <person name="McLean J."/>
            <person name="Mooney P."/>
            <person name="Moule S."/>
            <person name="Mungall K.L."/>
            <person name="Murphy L.D."/>
            <person name="Niblett D."/>
            <person name="Odell C."/>
            <person name="Oliver K."/>
            <person name="O'Neil S."/>
            <person name="Pearson D."/>
            <person name="Quail M.A."/>
            <person name="Rabbinowitsch E."/>
            <person name="Rutherford K.M."/>
            <person name="Rutter S."/>
            <person name="Saunders D."/>
            <person name="Seeger K."/>
            <person name="Sharp S."/>
            <person name="Skelton J."/>
            <person name="Simmonds M.N."/>
            <person name="Squares R."/>
            <person name="Squares S."/>
            <person name="Stevens K."/>
            <person name="Taylor K."/>
            <person name="Taylor R.G."/>
            <person name="Tivey A."/>
            <person name="Walsh S.V."/>
            <person name="Warren T."/>
            <person name="Whitehead S."/>
            <person name="Woodward J.R."/>
            <person name="Volckaert G."/>
            <person name="Aert R."/>
            <person name="Robben J."/>
            <person name="Grymonprez B."/>
            <person name="Weltjens I."/>
            <person name="Vanstreels E."/>
            <person name="Rieger M."/>
            <person name="Schaefer M."/>
            <person name="Mueller-Auer S."/>
            <person name="Gabel C."/>
            <person name="Fuchs M."/>
            <person name="Duesterhoeft A."/>
            <person name="Fritzc C."/>
            <person name="Holzer E."/>
            <person name="Moestl D."/>
            <person name="Hilbert H."/>
            <person name="Borzym K."/>
            <person name="Langer I."/>
            <person name="Beck A."/>
            <person name="Lehrach H."/>
            <person name="Reinhardt R."/>
            <person name="Pohl T.M."/>
            <person name="Eger P."/>
            <person name="Zimmermann W."/>
            <person name="Wedler H."/>
            <person name="Wambutt R."/>
            <person name="Purnelle B."/>
            <person name="Goffeau A."/>
            <person name="Cadieu E."/>
            <person name="Dreano S."/>
            <person name="Gloux S."/>
            <person name="Lelaure V."/>
            <person name="Mottier S."/>
            <person name="Galibert F."/>
            <person name="Aves S.J."/>
            <person name="Xiang Z."/>
            <person name="Hunt C."/>
            <person name="Moore K."/>
            <person name="Hurst S.M."/>
            <person name="Lucas M."/>
            <person name="Rochet M."/>
            <person name="Gaillardin C."/>
            <person name="Tallada V.A."/>
            <person name="Garzon A."/>
            <person name="Thode G."/>
            <person name="Daga R.R."/>
            <person name="Cruzado L."/>
            <person name="Jimenez J."/>
            <person name="Sanchez M."/>
            <person name="del Rey F."/>
            <person name="Benito J."/>
            <person name="Dominguez A."/>
            <person name="Revuelta J.L."/>
            <person name="Moreno S."/>
            <person name="Armstrong J."/>
            <person name="Forsburg S.L."/>
            <person name="Cerutti L."/>
            <person name="Lowe T."/>
            <person name="McCombie W.R."/>
            <person name="Paulsen I."/>
            <person name="Potashkin J."/>
            <person name="Shpakovski G.V."/>
            <person name="Ussery D."/>
            <person name="Barrell B.G."/>
            <person name="Nurse P."/>
        </authorList>
    </citation>
    <scope>NUCLEOTIDE SEQUENCE [LARGE SCALE GENOMIC DNA]</scope>
    <source>
        <strain>972 / ATCC 24843</strain>
    </source>
</reference>
<organism>
    <name type="scientific">Schizosaccharomyces pombe (strain 972 / ATCC 24843)</name>
    <name type="common">Fission yeast</name>
    <dbReference type="NCBI Taxonomy" id="284812"/>
    <lineage>
        <taxon>Eukaryota</taxon>
        <taxon>Fungi</taxon>
        <taxon>Dikarya</taxon>
        <taxon>Ascomycota</taxon>
        <taxon>Taphrinomycotina</taxon>
        <taxon>Schizosaccharomycetes</taxon>
        <taxon>Schizosaccharomycetales</taxon>
        <taxon>Schizosaccharomycetaceae</taxon>
        <taxon>Schizosaccharomyces</taxon>
    </lineage>
</organism>
<feature type="signal peptide" evidence="1">
    <location>
        <begin position="1"/>
        <end position="18"/>
    </location>
</feature>
<feature type="chain" id="PRO_0000033464" description="Probable secreted beta-glucosidase PSU1">
    <location>
        <begin position="19"/>
        <end position="417"/>
    </location>
</feature>
<sequence length="417" mass="41751">MRFFETLALALLTTGALAAPFRHPHHLLNKRDVSVVTSKVYAYTTVTLEAAASAISTNGAAKEAATAAGDAETTSSVAASVTPAASSSVAASVTPVASSSVAASVTPVSSSAVVDSATSAAASSSVIPTSSSVVASSSEVASSTTSSAAASATSTGSSSGGFQDGVYDCTDFPSDQSGVVALDYLGYGGYSGIQIGDGAGSSCVEGAYCSYACSPGMLKTQWPSTQPSDGETRGGLLCKGGKLYRTNTAYDNLCENGVGTASVQNTLGQGVAICQTDYPGSENMVIPTYVGGGATSPLSVTDNANYFQWEGKGTSAQYYVNKAGYTAEQGCQWGTSSGDYGNWSPLVFGAGMTDGTTWLSISQNPLTSQLANYNVKIVGADGASVSGTCVFENGAFQNGGSGCTVGITSGSGVFVFY</sequence>
<keyword id="KW-0119">Carbohydrate metabolism</keyword>
<keyword id="KW-0134">Cell wall</keyword>
<keyword id="KW-0961">Cell wall biogenesis/degradation</keyword>
<keyword id="KW-0326">Glycosidase</keyword>
<keyword id="KW-0378">Hydrolase</keyword>
<keyword id="KW-0624">Polysaccharide degradation</keyword>
<keyword id="KW-1185">Reference proteome</keyword>
<keyword id="KW-0964">Secreted</keyword>
<keyword id="KW-0732">Signal</keyword>
<gene>
    <name type="primary">psu1</name>
    <name type="ORF">SPAC1002.13c</name>
</gene>
<proteinExistence type="inferred from homology"/>